<reference key="1">
    <citation type="journal article" date="2005" name="Jpn. Agric. Res. Q.">
        <title>Genome sequence of Xanthomonas oryzae pv. oryzae suggests contribution of large numbers of effector genes and insertion sequences to its race diversity.</title>
        <authorList>
            <person name="Ochiai H."/>
            <person name="Inoue Y."/>
            <person name="Takeya M."/>
            <person name="Sasaki A."/>
            <person name="Kaku H."/>
        </authorList>
    </citation>
    <scope>NUCLEOTIDE SEQUENCE [LARGE SCALE GENOMIC DNA]</scope>
    <source>
        <strain>MAFF 311018</strain>
    </source>
</reference>
<protein>
    <recommendedName>
        <fullName evidence="1">Phosphate import ATP-binding protein PstB</fullName>
        <ecNumber evidence="1">7.3.2.1</ecNumber>
    </recommendedName>
    <alternativeName>
        <fullName evidence="1">ABC phosphate transporter</fullName>
    </alternativeName>
    <alternativeName>
        <fullName evidence="1">Phosphate-transporting ATPase</fullName>
    </alternativeName>
</protein>
<organism>
    <name type="scientific">Xanthomonas oryzae pv. oryzae (strain MAFF 311018)</name>
    <dbReference type="NCBI Taxonomy" id="342109"/>
    <lineage>
        <taxon>Bacteria</taxon>
        <taxon>Pseudomonadati</taxon>
        <taxon>Pseudomonadota</taxon>
        <taxon>Gammaproteobacteria</taxon>
        <taxon>Lysobacterales</taxon>
        <taxon>Lysobacteraceae</taxon>
        <taxon>Xanthomonas</taxon>
    </lineage>
</organism>
<sequence>MHRIAVPAATGAQTAQAPVKVAARNLDFYYDKYHALKSINIEIPEKRVTALIGPSGCGKSTLLRIFNRIYALYPKMEARGEVLLDNENILSPKYPMNRLRSKVGMVFQKPVPFPMTIFENVAYGIRHHEKLSKADMQNRVEHALRQGALWDEVKDKLGQSALGLSGGQQQRLCIARAVALRPDVLLLDEPTSALDPISTSRIEQLVEELKRDYTIVIVTHNMQQAARVSDYTAFMYLGDLIEHDRTETIFSQPSKQQTEDYITGRFG</sequence>
<name>PSTB_XANOM</name>
<gene>
    <name evidence="1" type="primary">pstB</name>
    <name type="ordered locus">XOO2337</name>
</gene>
<dbReference type="EC" id="7.3.2.1" evidence="1"/>
<dbReference type="EMBL" id="AP008229">
    <property type="protein sequence ID" value="BAE69092.1"/>
    <property type="molecule type" value="Genomic_DNA"/>
</dbReference>
<dbReference type="SMR" id="Q2P2Y5"/>
<dbReference type="KEGG" id="xom:XOO2337"/>
<dbReference type="HOGENOM" id="CLU_000604_1_22_6"/>
<dbReference type="GO" id="GO:0005886">
    <property type="term" value="C:plasma membrane"/>
    <property type="evidence" value="ECO:0007669"/>
    <property type="project" value="UniProtKB-SubCell"/>
</dbReference>
<dbReference type="GO" id="GO:0005524">
    <property type="term" value="F:ATP binding"/>
    <property type="evidence" value="ECO:0007669"/>
    <property type="project" value="UniProtKB-KW"/>
</dbReference>
<dbReference type="GO" id="GO:0016887">
    <property type="term" value="F:ATP hydrolysis activity"/>
    <property type="evidence" value="ECO:0007669"/>
    <property type="project" value="InterPro"/>
</dbReference>
<dbReference type="GO" id="GO:0015415">
    <property type="term" value="F:ATPase-coupled phosphate ion transmembrane transporter activity"/>
    <property type="evidence" value="ECO:0007669"/>
    <property type="project" value="UniProtKB-EC"/>
</dbReference>
<dbReference type="GO" id="GO:0035435">
    <property type="term" value="P:phosphate ion transmembrane transport"/>
    <property type="evidence" value="ECO:0007669"/>
    <property type="project" value="InterPro"/>
</dbReference>
<dbReference type="CDD" id="cd03260">
    <property type="entry name" value="ABC_PstB_phosphate_transporter"/>
    <property type="match status" value="1"/>
</dbReference>
<dbReference type="FunFam" id="3.40.50.300:FF:000132">
    <property type="entry name" value="Phosphate import ATP-binding protein PstB"/>
    <property type="match status" value="1"/>
</dbReference>
<dbReference type="Gene3D" id="3.40.50.300">
    <property type="entry name" value="P-loop containing nucleotide triphosphate hydrolases"/>
    <property type="match status" value="1"/>
</dbReference>
<dbReference type="InterPro" id="IPR003593">
    <property type="entry name" value="AAA+_ATPase"/>
</dbReference>
<dbReference type="InterPro" id="IPR003439">
    <property type="entry name" value="ABC_transporter-like_ATP-bd"/>
</dbReference>
<dbReference type="InterPro" id="IPR017871">
    <property type="entry name" value="ABC_transporter-like_CS"/>
</dbReference>
<dbReference type="InterPro" id="IPR027417">
    <property type="entry name" value="P-loop_NTPase"/>
</dbReference>
<dbReference type="InterPro" id="IPR005670">
    <property type="entry name" value="PstB-like"/>
</dbReference>
<dbReference type="NCBIfam" id="TIGR00972">
    <property type="entry name" value="3a0107s01c2"/>
    <property type="match status" value="1"/>
</dbReference>
<dbReference type="PANTHER" id="PTHR43423">
    <property type="entry name" value="ABC TRANSPORTER I FAMILY MEMBER 17"/>
    <property type="match status" value="1"/>
</dbReference>
<dbReference type="PANTHER" id="PTHR43423:SF3">
    <property type="entry name" value="PHOSPHATE IMPORT ATP-BINDING PROTEIN PSTB"/>
    <property type="match status" value="1"/>
</dbReference>
<dbReference type="Pfam" id="PF00005">
    <property type="entry name" value="ABC_tran"/>
    <property type="match status" value="1"/>
</dbReference>
<dbReference type="SMART" id="SM00382">
    <property type="entry name" value="AAA"/>
    <property type="match status" value="1"/>
</dbReference>
<dbReference type="SUPFAM" id="SSF52540">
    <property type="entry name" value="P-loop containing nucleoside triphosphate hydrolases"/>
    <property type="match status" value="1"/>
</dbReference>
<dbReference type="PROSITE" id="PS00211">
    <property type="entry name" value="ABC_TRANSPORTER_1"/>
    <property type="match status" value="1"/>
</dbReference>
<dbReference type="PROSITE" id="PS50893">
    <property type="entry name" value="ABC_TRANSPORTER_2"/>
    <property type="match status" value="1"/>
</dbReference>
<dbReference type="PROSITE" id="PS51238">
    <property type="entry name" value="PSTB"/>
    <property type="match status" value="1"/>
</dbReference>
<evidence type="ECO:0000255" key="1">
    <source>
        <dbReference type="HAMAP-Rule" id="MF_01702"/>
    </source>
</evidence>
<feature type="chain" id="PRO_0000272577" description="Phosphate import ATP-binding protein PstB">
    <location>
        <begin position="1"/>
        <end position="267"/>
    </location>
</feature>
<feature type="domain" description="ABC transporter" evidence="1">
    <location>
        <begin position="21"/>
        <end position="262"/>
    </location>
</feature>
<feature type="binding site" evidence="1">
    <location>
        <begin position="53"/>
        <end position="60"/>
    </location>
    <ligand>
        <name>ATP</name>
        <dbReference type="ChEBI" id="CHEBI:30616"/>
    </ligand>
</feature>
<proteinExistence type="inferred from homology"/>
<comment type="function">
    <text evidence="1">Part of the ABC transporter complex PstSACB involved in phosphate import. Responsible for energy coupling to the transport system.</text>
</comment>
<comment type="catalytic activity">
    <reaction evidence="1">
        <text>phosphate(out) + ATP + H2O = ADP + 2 phosphate(in) + H(+)</text>
        <dbReference type="Rhea" id="RHEA:24440"/>
        <dbReference type="ChEBI" id="CHEBI:15377"/>
        <dbReference type="ChEBI" id="CHEBI:15378"/>
        <dbReference type="ChEBI" id="CHEBI:30616"/>
        <dbReference type="ChEBI" id="CHEBI:43474"/>
        <dbReference type="ChEBI" id="CHEBI:456216"/>
        <dbReference type="EC" id="7.3.2.1"/>
    </reaction>
</comment>
<comment type="subunit">
    <text evidence="1">The complex is composed of two ATP-binding proteins (PstB), two transmembrane proteins (PstC and PstA) and a solute-binding protein (PstS).</text>
</comment>
<comment type="subcellular location">
    <subcellularLocation>
        <location evidence="1">Cell inner membrane</location>
        <topology evidence="1">Peripheral membrane protein</topology>
    </subcellularLocation>
</comment>
<comment type="similarity">
    <text evidence="1">Belongs to the ABC transporter superfamily. Phosphate importer (TC 3.A.1.7) family.</text>
</comment>
<keyword id="KW-0067">ATP-binding</keyword>
<keyword id="KW-0997">Cell inner membrane</keyword>
<keyword id="KW-1003">Cell membrane</keyword>
<keyword id="KW-0472">Membrane</keyword>
<keyword id="KW-0547">Nucleotide-binding</keyword>
<keyword id="KW-0592">Phosphate transport</keyword>
<keyword id="KW-1278">Translocase</keyword>
<keyword id="KW-0813">Transport</keyword>
<accession>Q2P2Y5</accession>